<proteinExistence type="evidence at protein level"/>
<feature type="chain" id="PRO_0000213616" description="Novel plant SNARE 11">
    <location>
        <begin position="1"/>
        <end position="265"/>
    </location>
</feature>
<feature type="topological domain" description="Cytoplasmic" evidence="1">
    <location>
        <begin position="1"/>
        <end position="215"/>
    </location>
</feature>
<feature type="transmembrane region" description="Helical; Anchor for type IV membrane protein" evidence="1">
    <location>
        <begin position="216"/>
        <end position="236"/>
    </location>
</feature>
<feature type="topological domain" description="Vesicular" evidence="1">
    <location>
        <begin position="237"/>
        <end position="265"/>
    </location>
</feature>
<feature type="domain" description="t-SNARE coiled-coil homology" evidence="2">
    <location>
        <begin position="144"/>
        <end position="206"/>
    </location>
</feature>
<feature type="coiled-coil region" evidence="1">
    <location>
        <begin position="30"/>
        <end position="75"/>
    </location>
</feature>
<feature type="sequence conflict" description="In Ref. 3; AAL27494/AAN28778." evidence="3" ref="3">
    <original>A</original>
    <variation>P</variation>
    <location>
        <position position="177"/>
    </location>
</feature>
<name>NPS11_ARATH</name>
<keyword id="KW-0131">Cell cycle</keyword>
<keyword id="KW-0132">Cell division</keyword>
<keyword id="KW-0175">Coiled coil</keyword>
<keyword id="KW-0472">Membrane</keyword>
<keyword id="KW-0653">Protein transport</keyword>
<keyword id="KW-1185">Reference proteome</keyword>
<keyword id="KW-0812">Transmembrane</keyword>
<keyword id="KW-1133">Transmembrane helix</keyword>
<keyword id="KW-0813">Transport</keyword>
<comment type="function">
    <text>t-SNARE involved in diverse vesicle trafficking and membrane fusion processes, including cell plate formation.</text>
</comment>
<comment type="subunit">
    <text>Interacts with KNOLLE to form a t-SNARE complex. Does not interact with SYP21, VTI12 or VPS45.</text>
</comment>
<comment type="subcellular location">
    <subcellularLocation>
        <location>Membrane</location>
        <topology>Single-pass type IV membrane protein</topology>
    </subcellularLocation>
    <text>Cell plate during cell division.</text>
</comment>
<comment type="tissue specificity">
    <text>Expressed in roots, stems, flower, siliques, expanding leaves, but not in mature leaves. Not limited to dividing cells.</text>
</comment>
<comment type="similarity">
    <text evidence="3">Belongs to the novel plant SNARE family.</text>
</comment>
<organism>
    <name type="scientific">Arabidopsis thaliana</name>
    <name type="common">Mouse-ear cress</name>
    <dbReference type="NCBI Taxonomy" id="3702"/>
    <lineage>
        <taxon>Eukaryota</taxon>
        <taxon>Viridiplantae</taxon>
        <taxon>Streptophyta</taxon>
        <taxon>Embryophyta</taxon>
        <taxon>Tracheophyta</taxon>
        <taxon>Spermatophyta</taxon>
        <taxon>Magnoliopsida</taxon>
        <taxon>eudicotyledons</taxon>
        <taxon>Gunneridae</taxon>
        <taxon>Pentapetalae</taxon>
        <taxon>rosids</taxon>
        <taxon>malvids</taxon>
        <taxon>Brassicales</taxon>
        <taxon>Brassicaceae</taxon>
        <taxon>Camelineae</taxon>
        <taxon>Arabidopsis</taxon>
    </lineage>
</organism>
<accession>Q944A9</accession>
<accession>O82173</accession>
<protein>
    <recommendedName>
        <fullName>Novel plant SNARE 11</fullName>
        <shortName>AtNPSN11</shortName>
    </recommendedName>
</protein>
<evidence type="ECO:0000255" key="1"/>
<evidence type="ECO:0000255" key="2">
    <source>
        <dbReference type="PROSITE-ProRule" id="PRU00202"/>
    </source>
</evidence>
<evidence type="ECO:0000305" key="3"/>
<dbReference type="EMBL" id="AC004667">
    <property type="protein sequence ID" value="AAC61818.2"/>
    <property type="molecule type" value="Genomic_DNA"/>
</dbReference>
<dbReference type="EMBL" id="CP002685">
    <property type="protein sequence ID" value="AEC09077.1"/>
    <property type="molecule type" value="Genomic_DNA"/>
</dbReference>
<dbReference type="EMBL" id="AF439822">
    <property type="protein sequence ID" value="AAL27494.1"/>
    <property type="molecule type" value="mRNA"/>
</dbReference>
<dbReference type="EMBL" id="AY143839">
    <property type="protein sequence ID" value="AAN28778.1"/>
    <property type="molecule type" value="mRNA"/>
</dbReference>
<dbReference type="PIR" id="F84765">
    <property type="entry name" value="F84765"/>
</dbReference>
<dbReference type="RefSeq" id="NP_565800.1">
    <property type="nucleotide sequence ID" value="NM_129072.4"/>
</dbReference>
<dbReference type="SMR" id="Q944A9"/>
<dbReference type="BioGRID" id="3432">
    <property type="interactions" value="13"/>
</dbReference>
<dbReference type="FunCoup" id="Q944A9">
    <property type="interactions" value="139"/>
</dbReference>
<dbReference type="IntAct" id="Q944A9">
    <property type="interactions" value="6"/>
</dbReference>
<dbReference type="STRING" id="3702.Q944A9"/>
<dbReference type="SwissPalm" id="Q944A9"/>
<dbReference type="PaxDb" id="3702-AT2G35190.1"/>
<dbReference type="ProteomicsDB" id="250516"/>
<dbReference type="EnsemblPlants" id="AT2G35190.1">
    <property type="protein sequence ID" value="AT2G35190.1"/>
    <property type="gene ID" value="AT2G35190"/>
</dbReference>
<dbReference type="GeneID" id="818086"/>
<dbReference type="Gramene" id="AT2G35190.1">
    <property type="protein sequence ID" value="AT2G35190.1"/>
    <property type="gene ID" value="AT2G35190"/>
</dbReference>
<dbReference type="KEGG" id="ath:AT2G35190"/>
<dbReference type="Araport" id="AT2G35190"/>
<dbReference type="TAIR" id="AT2G35190">
    <property type="gene designation" value="NPSN11"/>
</dbReference>
<dbReference type="eggNOG" id="ENOG502S126">
    <property type="taxonomic scope" value="Eukaryota"/>
</dbReference>
<dbReference type="HOGENOM" id="CLU_058321_0_0_1"/>
<dbReference type="InParanoid" id="Q944A9"/>
<dbReference type="OMA" id="GPGEEHM"/>
<dbReference type="OrthoDB" id="19261at2759"/>
<dbReference type="PRO" id="PR:Q944A9"/>
<dbReference type="Proteomes" id="UP000006548">
    <property type="component" value="Chromosome 2"/>
</dbReference>
<dbReference type="ExpressionAtlas" id="Q944A9">
    <property type="expression patterns" value="baseline and differential"/>
</dbReference>
<dbReference type="GO" id="GO:0009504">
    <property type="term" value="C:cell plate"/>
    <property type="evidence" value="ECO:0000314"/>
    <property type="project" value="TAIR"/>
</dbReference>
<dbReference type="GO" id="GO:0005783">
    <property type="term" value="C:endoplasmic reticulum"/>
    <property type="evidence" value="ECO:0007005"/>
    <property type="project" value="TAIR"/>
</dbReference>
<dbReference type="GO" id="GO:0031201">
    <property type="term" value="C:SNARE complex"/>
    <property type="evidence" value="ECO:0007669"/>
    <property type="project" value="InterPro"/>
</dbReference>
<dbReference type="GO" id="GO:0005484">
    <property type="term" value="F:SNAP receptor activity"/>
    <property type="evidence" value="ECO:0000250"/>
    <property type="project" value="TAIR"/>
</dbReference>
<dbReference type="GO" id="GO:0000911">
    <property type="term" value="P:cytokinesis by cell plate formation"/>
    <property type="evidence" value="ECO:0000304"/>
    <property type="project" value="TAIR"/>
</dbReference>
<dbReference type="GO" id="GO:0015031">
    <property type="term" value="P:protein transport"/>
    <property type="evidence" value="ECO:0007669"/>
    <property type="project" value="UniProtKB-KW"/>
</dbReference>
<dbReference type="CDD" id="cd15861">
    <property type="entry name" value="SNARE_SNAP25N_23N_29N_SEC9N"/>
    <property type="match status" value="1"/>
</dbReference>
<dbReference type="FunFam" id="1.20.5.110:FF:000021">
    <property type="entry name" value="novel plant SNARE 11"/>
    <property type="match status" value="1"/>
</dbReference>
<dbReference type="Gene3D" id="1.20.5.110">
    <property type="match status" value="1"/>
</dbReference>
<dbReference type="InterPro" id="IPR044766">
    <property type="entry name" value="NPSN/SNAP25-like_N_SNARE"/>
</dbReference>
<dbReference type="InterPro" id="IPR056173">
    <property type="entry name" value="Sec20_C"/>
</dbReference>
<dbReference type="InterPro" id="IPR000727">
    <property type="entry name" value="T_SNARE_dom"/>
</dbReference>
<dbReference type="PANTHER" id="PTHR21230:SF27">
    <property type="entry name" value="NOVEL PLANT SNARE 11"/>
    <property type="match status" value="1"/>
</dbReference>
<dbReference type="PANTHER" id="PTHR21230">
    <property type="entry name" value="VESICLE TRANSPORT V-SNARE PROTEIN VTI1-RELATED"/>
    <property type="match status" value="1"/>
</dbReference>
<dbReference type="Pfam" id="PF03908">
    <property type="entry name" value="Sec20"/>
    <property type="match status" value="1"/>
</dbReference>
<dbReference type="SMART" id="SM00397">
    <property type="entry name" value="t_SNARE"/>
    <property type="match status" value="1"/>
</dbReference>
<dbReference type="SUPFAM" id="SSF58038">
    <property type="entry name" value="SNARE fusion complex"/>
    <property type="match status" value="1"/>
</dbReference>
<dbReference type="PROSITE" id="PS50192">
    <property type="entry name" value="T_SNARE"/>
    <property type="match status" value="1"/>
</dbReference>
<gene>
    <name type="primary">NPSN11</name>
    <name type="ordered locus">At2g35190</name>
    <name type="ORF">T4C15.14</name>
</gene>
<reference key="1">
    <citation type="journal article" date="1999" name="Nature">
        <title>Sequence and analysis of chromosome 2 of the plant Arabidopsis thaliana.</title>
        <authorList>
            <person name="Lin X."/>
            <person name="Kaul S."/>
            <person name="Rounsley S.D."/>
            <person name="Shea T.P."/>
            <person name="Benito M.-I."/>
            <person name="Town C.D."/>
            <person name="Fujii C.Y."/>
            <person name="Mason T.M."/>
            <person name="Bowman C.L."/>
            <person name="Barnstead M.E."/>
            <person name="Feldblyum T.V."/>
            <person name="Buell C.R."/>
            <person name="Ketchum K.A."/>
            <person name="Lee J.J."/>
            <person name="Ronning C.M."/>
            <person name="Koo H.L."/>
            <person name="Moffat K.S."/>
            <person name="Cronin L.A."/>
            <person name="Shen M."/>
            <person name="Pai G."/>
            <person name="Van Aken S."/>
            <person name="Umayam L."/>
            <person name="Tallon L.J."/>
            <person name="Gill J.E."/>
            <person name="Adams M.D."/>
            <person name="Carrera A.J."/>
            <person name="Creasy T.H."/>
            <person name="Goodman H.M."/>
            <person name="Somerville C.R."/>
            <person name="Copenhaver G.P."/>
            <person name="Preuss D."/>
            <person name="Nierman W.C."/>
            <person name="White O."/>
            <person name="Eisen J.A."/>
            <person name="Salzberg S.L."/>
            <person name="Fraser C.M."/>
            <person name="Venter J.C."/>
        </authorList>
    </citation>
    <scope>NUCLEOTIDE SEQUENCE [LARGE SCALE GENOMIC DNA]</scope>
    <source>
        <strain>cv. Columbia</strain>
    </source>
</reference>
<reference key="2">
    <citation type="journal article" date="2017" name="Plant J.">
        <title>Araport11: a complete reannotation of the Arabidopsis thaliana reference genome.</title>
        <authorList>
            <person name="Cheng C.Y."/>
            <person name="Krishnakumar V."/>
            <person name="Chan A.P."/>
            <person name="Thibaud-Nissen F."/>
            <person name="Schobel S."/>
            <person name="Town C.D."/>
        </authorList>
    </citation>
    <scope>GENOME REANNOTATION</scope>
    <source>
        <strain>cv. Columbia</strain>
    </source>
</reference>
<reference key="3">
    <citation type="journal article" date="2003" name="Science">
        <title>Empirical analysis of transcriptional activity in the Arabidopsis genome.</title>
        <authorList>
            <person name="Yamada K."/>
            <person name="Lim J."/>
            <person name="Dale J.M."/>
            <person name="Chen H."/>
            <person name="Shinn P."/>
            <person name="Palm C.J."/>
            <person name="Southwick A.M."/>
            <person name="Wu H.C."/>
            <person name="Kim C.J."/>
            <person name="Nguyen M."/>
            <person name="Pham P.K."/>
            <person name="Cheuk R.F."/>
            <person name="Karlin-Newmann G."/>
            <person name="Liu S.X."/>
            <person name="Lam B."/>
            <person name="Sakano H."/>
            <person name="Wu T."/>
            <person name="Yu G."/>
            <person name="Miranda M."/>
            <person name="Quach H.L."/>
            <person name="Tripp M."/>
            <person name="Chang C.H."/>
            <person name="Lee J.M."/>
            <person name="Toriumi M.J."/>
            <person name="Chan M.M."/>
            <person name="Tang C.C."/>
            <person name="Onodera C.S."/>
            <person name="Deng J.M."/>
            <person name="Akiyama K."/>
            <person name="Ansari Y."/>
            <person name="Arakawa T."/>
            <person name="Banh J."/>
            <person name="Banno F."/>
            <person name="Bowser L."/>
            <person name="Brooks S.Y."/>
            <person name="Carninci P."/>
            <person name="Chao Q."/>
            <person name="Choy N."/>
            <person name="Enju A."/>
            <person name="Goldsmith A.D."/>
            <person name="Gurjal M."/>
            <person name="Hansen N.F."/>
            <person name="Hayashizaki Y."/>
            <person name="Johnson-Hopson C."/>
            <person name="Hsuan V.W."/>
            <person name="Iida K."/>
            <person name="Karnes M."/>
            <person name="Khan S."/>
            <person name="Koesema E."/>
            <person name="Ishida J."/>
            <person name="Jiang P.X."/>
            <person name="Jones T."/>
            <person name="Kawai J."/>
            <person name="Kamiya A."/>
            <person name="Meyers C."/>
            <person name="Nakajima M."/>
            <person name="Narusaka M."/>
            <person name="Seki M."/>
            <person name="Sakurai T."/>
            <person name="Satou M."/>
            <person name="Tamse R."/>
            <person name="Vaysberg M."/>
            <person name="Wallender E.K."/>
            <person name="Wong C."/>
            <person name="Yamamura Y."/>
            <person name="Yuan S."/>
            <person name="Shinozaki K."/>
            <person name="Davis R.W."/>
            <person name="Theologis A."/>
            <person name="Ecker J.R."/>
        </authorList>
    </citation>
    <scope>NUCLEOTIDE SEQUENCE [LARGE SCALE MRNA]</scope>
    <source>
        <strain>cv. Columbia</strain>
    </source>
</reference>
<reference key="4">
    <citation type="journal article" date="2002" name="Plant Physiol.">
        <title>NPSN11 is a cell plate-associated SNARE protein that interacts with the syntaxin KNOLLE.</title>
        <authorList>
            <person name="Zheng H."/>
            <person name="Bednarek S.Y."/>
            <person name="Sanderfoot A.A."/>
            <person name="Alonso J."/>
            <person name="Ecker J.R."/>
            <person name="Raikhel N.V."/>
        </authorList>
    </citation>
    <scope>CHARACTERIZATION</scope>
</reference>
<sequence>MDPISAVSEELAEIEGQINDIFRALSNGFQKLEKIKDANRQSRQLEELTDKMRDCKSLIKDFDREIKSLESGNDASTNRMLNDRRQSMVKELNSYVALKKKYSSNLASNNKRVDLFDGPGEEHMEENVLLASNMSNQELMDKGNSMMDDTDQAIERGKKIVQETINVGTDTSAALKAQTEQMSRVVNELDSIHFSLKKASKLVKEIGRQVATDKCIMAFLFLIVIGVIAIIIVKIVNPNNKDIRDIPGVGLAPPAMNRRLLWNHY</sequence>